<accession>Q6GI64</accession>
<gene>
    <name evidence="1" type="primary">prfC</name>
    <name type="ordered locus">SAR0990</name>
</gene>
<sequence>MNLKQEVESRKTFAIISHPDAGKTTLTEKLLYFSGAIREAGTVKGKKTGKFATSDWMKVEQERGISVTSSVMQFDYDDYKINILDTPGHEDFSEDTYRTLMAVDSAVMVIDCAKGIEPQTLKLFKVCKMRGIPIFTFINKLDRVGKEPFELLDEIEETLNIETYPMNWPIGMGQSFFGIIDRKSKTIEPFRDEENILHLNDDFELEEDHAITNDSAFEQAIEELMLVEEAGEAFDNDALLSGDLTPVFFGSALANFGVQNFLNAYVDFAPMPNARQTKEEVEVSPFDDSFSGFIFKIQANMDPKHRDRIAFMRVVSGAFERGMDVTLQRTNKKQKITRSTSFMADDKETVNHAVAGDIIGLYDTGNYQIGDTLVGGKQTYSFQDLPQFTPEIFMKVSAKNVMKQKHFHKGIEQLVQEGAIQYYKTLHTNQIILGAVGQLQFEVFEHRMKNEYNVDVVMEPVGRKIARWIENEDQITDKMNTSRSILVKDRYDDLVFLFENEFATRWFEEKFPEIKLYSLL</sequence>
<organism>
    <name type="scientific">Staphylococcus aureus (strain MRSA252)</name>
    <dbReference type="NCBI Taxonomy" id="282458"/>
    <lineage>
        <taxon>Bacteria</taxon>
        <taxon>Bacillati</taxon>
        <taxon>Bacillota</taxon>
        <taxon>Bacilli</taxon>
        <taxon>Bacillales</taxon>
        <taxon>Staphylococcaceae</taxon>
        <taxon>Staphylococcus</taxon>
    </lineage>
</organism>
<feature type="chain" id="PRO_0000210964" description="Peptide chain release factor 3">
    <location>
        <begin position="1"/>
        <end position="520"/>
    </location>
</feature>
<feature type="domain" description="tr-type G">
    <location>
        <begin position="8"/>
        <end position="277"/>
    </location>
</feature>
<feature type="binding site" evidence="1">
    <location>
        <begin position="17"/>
        <end position="24"/>
    </location>
    <ligand>
        <name>GTP</name>
        <dbReference type="ChEBI" id="CHEBI:37565"/>
    </ligand>
</feature>
<feature type="binding site" evidence="1">
    <location>
        <begin position="85"/>
        <end position="89"/>
    </location>
    <ligand>
        <name>GTP</name>
        <dbReference type="ChEBI" id="CHEBI:37565"/>
    </ligand>
</feature>
<feature type="binding site" evidence="1">
    <location>
        <begin position="139"/>
        <end position="142"/>
    </location>
    <ligand>
        <name>GTP</name>
        <dbReference type="ChEBI" id="CHEBI:37565"/>
    </ligand>
</feature>
<keyword id="KW-0963">Cytoplasm</keyword>
<keyword id="KW-0342">GTP-binding</keyword>
<keyword id="KW-0547">Nucleotide-binding</keyword>
<keyword id="KW-0648">Protein biosynthesis</keyword>
<evidence type="ECO:0000255" key="1">
    <source>
        <dbReference type="HAMAP-Rule" id="MF_00072"/>
    </source>
</evidence>
<name>RF3_STAAR</name>
<proteinExistence type="inferred from homology"/>
<protein>
    <recommendedName>
        <fullName evidence="1">Peptide chain release factor 3</fullName>
        <shortName evidence="1">RF-3</shortName>
    </recommendedName>
</protein>
<reference key="1">
    <citation type="journal article" date="2004" name="Proc. Natl. Acad. Sci. U.S.A.">
        <title>Complete genomes of two clinical Staphylococcus aureus strains: evidence for the rapid evolution of virulence and drug resistance.</title>
        <authorList>
            <person name="Holden M.T.G."/>
            <person name="Feil E.J."/>
            <person name="Lindsay J.A."/>
            <person name="Peacock S.J."/>
            <person name="Day N.P.J."/>
            <person name="Enright M.C."/>
            <person name="Foster T.J."/>
            <person name="Moore C.E."/>
            <person name="Hurst L."/>
            <person name="Atkin R."/>
            <person name="Barron A."/>
            <person name="Bason N."/>
            <person name="Bentley S.D."/>
            <person name="Chillingworth C."/>
            <person name="Chillingworth T."/>
            <person name="Churcher C."/>
            <person name="Clark L."/>
            <person name="Corton C."/>
            <person name="Cronin A."/>
            <person name="Doggett J."/>
            <person name="Dowd L."/>
            <person name="Feltwell T."/>
            <person name="Hance Z."/>
            <person name="Harris B."/>
            <person name="Hauser H."/>
            <person name="Holroyd S."/>
            <person name="Jagels K."/>
            <person name="James K.D."/>
            <person name="Lennard N."/>
            <person name="Line A."/>
            <person name="Mayes R."/>
            <person name="Moule S."/>
            <person name="Mungall K."/>
            <person name="Ormond D."/>
            <person name="Quail M.A."/>
            <person name="Rabbinowitsch E."/>
            <person name="Rutherford K.M."/>
            <person name="Sanders M."/>
            <person name="Sharp S."/>
            <person name="Simmonds M."/>
            <person name="Stevens K."/>
            <person name="Whitehead S."/>
            <person name="Barrell B.G."/>
            <person name="Spratt B.G."/>
            <person name="Parkhill J."/>
        </authorList>
    </citation>
    <scope>NUCLEOTIDE SEQUENCE [LARGE SCALE GENOMIC DNA]</scope>
    <source>
        <strain>MRSA252</strain>
    </source>
</reference>
<dbReference type="EMBL" id="BX571856">
    <property type="protein sequence ID" value="CAG39995.1"/>
    <property type="molecule type" value="Genomic_DNA"/>
</dbReference>
<dbReference type="RefSeq" id="WP_001049957.1">
    <property type="nucleotide sequence ID" value="NC_002952.2"/>
</dbReference>
<dbReference type="SMR" id="Q6GI64"/>
<dbReference type="KEGG" id="sar:SAR0990"/>
<dbReference type="HOGENOM" id="CLU_002794_2_1_9"/>
<dbReference type="Proteomes" id="UP000000596">
    <property type="component" value="Chromosome"/>
</dbReference>
<dbReference type="GO" id="GO:0005829">
    <property type="term" value="C:cytosol"/>
    <property type="evidence" value="ECO:0007669"/>
    <property type="project" value="TreeGrafter"/>
</dbReference>
<dbReference type="GO" id="GO:0005525">
    <property type="term" value="F:GTP binding"/>
    <property type="evidence" value="ECO:0007669"/>
    <property type="project" value="UniProtKB-UniRule"/>
</dbReference>
<dbReference type="GO" id="GO:0003924">
    <property type="term" value="F:GTPase activity"/>
    <property type="evidence" value="ECO:0007669"/>
    <property type="project" value="InterPro"/>
</dbReference>
<dbReference type="GO" id="GO:0016150">
    <property type="term" value="F:translation release factor activity, codon nonspecific"/>
    <property type="evidence" value="ECO:0007669"/>
    <property type="project" value="TreeGrafter"/>
</dbReference>
<dbReference type="GO" id="GO:0016149">
    <property type="term" value="F:translation release factor activity, codon specific"/>
    <property type="evidence" value="ECO:0007669"/>
    <property type="project" value="UniProtKB-UniRule"/>
</dbReference>
<dbReference type="GO" id="GO:0006449">
    <property type="term" value="P:regulation of translational termination"/>
    <property type="evidence" value="ECO:0007669"/>
    <property type="project" value="UniProtKB-UniRule"/>
</dbReference>
<dbReference type="CDD" id="cd04169">
    <property type="entry name" value="RF3"/>
    <property type="match status" value="1"/>
</dbReference>
<dbReference type="CDD" id="cd16259">
    <property type="entry name" value="RF3_III"/>
    <property type="match status" value="1"/>
</dbReference>
<dbReference type="FunFam" id="2.40.30.10:FF:000040">
    <property type="entry name" value="Peptide chain release factor 3"/>
    <property type="match status" value="1"/>
</dbReference>
<dbReference type="FunFam" id="3.30.70.3280:FF:000001">
    <property type="entry name" value="Peptide chain release factor 3"/>
    <property type="match status" value="1"/>
</dbReference>
<dbReference type="FunFam" id="3.40.50.300:FF:000542">
    <property type="entry name" value="Peptide chain release factor 3"/>
    <property type="match status" value="1"/>
</dbReference>
<dbReference type="Gene3D" id="3.40.50.300">
    <property type="entry name" value="P-loop containing nucleotide triphosphate hydrolases"/>
    <property type="match status" value="1"/>
</dbReference>
<dbReference type="Gene3D" id="3.30.70.3280">
    <property type="entry name" value="Peptide chain release factor 3, domain III"/>
    <property type="match status" value="1"/>
</dbReference>
<dbReference type="Gene3D" id="2.40.30.10">
    <property type="entry name" value="Translation factors"/>
    <property type="match status" value="1"/>
</dbReference>
<dbReference type="HAMAP" id="MF_00072">
    <property type="entry name" value="Rel_fac_3"/>
    <property type="match status" value="1"/>
</dbReference>
<dbReference type="InterPro" id="IPR053905">
    <property type="entry name" value="EF-G-like_DII"/>
</dbReference>
<dbReference type="InterPro" id="IPR035647">
    <property type="entry name" value="EFG_III/V"/>
</dbReference>
<dbReference type="InterPro" id="IPR031157">
    <property type="entry name" value="G_TR_CS"/>
</dbReference>
<dbReference type="InterPro" id="IPR027417">
    <property type="entry name" value="P-loop_NTPase"/>
</dbReference>
<dbReference type="InterPro" id="IPR004548">
    <property type="entry name" value="PrfC"/>
</dbReference>
<dbReference type="InterPro" id="IPR032090">
    <property type="entry name" value="RF3_C"/>
</dbReference>
<dbReference type="InterPro" id="IPR038467">
    <property type="entry name" value="RF3_dom_3_sf"/>
</dbReference>
<dbReference type="InterPro" id="IPR041732">
    <property type="entry name" value="RF3_GTP-bd"/>
</dbReference>
<dbReference type="InterPro" id="IPR005225">
    <property type="entry name" value="Small_GTP-bd"/>
</dbReference>
<dbReference type="InterPro" id="IPR000795">
    <property type="entry name" value="T_Tr_GTP-bd_dom"/>
</dbReference>
<dbReference type="InterPro" id="IPR009000">
    <property type="entry name" value="Transl_B-barrel_sf"/>
</dbReference>
<dbReference type="NCBIfam" id="TIGR00503">
    <property type="entry name" value="prfC"/>
    <property type="match status" value="1"/>
</dbReference>
<dbReference type="NCBIfam" id="NF001964">
    <property type="entry name" value="PRK00741.1"/>
    <property type="match status" value="1"/>
</dbReference>
<dbReference type="NCBIfam" id="TIGR00231">
    <property type="entry name" value="small_GTP"/>
    <property type="match status" value="1"/>
</dbReference>
<dbReference type="PANTHER" id="PTHR43556">
    <property type="entry name" value="PEPTIDE CHAIN RELEASE FACTOR RF3"/>
    <property type="match status" value="1"/>
</dbReference>
<dbReference type="PANTHER" id="PTHR43556:SF2">
    <property type="entry name" value="PEPTIDE CHAIN RELEASE FACTOR RF3"/>
    <property type="match status" value="1"/>
</dbReference>
<dbReference type="Pfam" id="PF22042">
    <property type="entry name" value="EF-G_D2"/>
    <property type="match status" value="1"/>
</dbReference>
<dbReference type="Pfam" id="PF00009">
    <property type="entry name" value="GTP_EFTU"/>
    <property type="match status" value="1"/>
</dbReference>
<dbReference type="Pfam" id="PF16658">
    <property type="entry name" value="RF3_C"/>
    <property type="match status" value="1"/>
</dbReference>
<dbReference type="PRINTS" id="PR00315">
    <property type="entry name" value="ELONGATNFCT"/>
</dbReference>
<dbReference type="SUPFAM" id="SSF54980">
    <property type="entry name" value="EF-G C-terminal domain-like"/>
    <property type="match status" value="1"/>
</dbReference>
<dbReference type="SUPFAM" id="SSF52540">
    <property type="entry name" value="P-loop containing nucleoside triphosphate hydrolases"/>
    <property type="match status" value="1"/>
</dbReference>
<dbReference type="SUPFAM" id="SSF50447">
    <property type="entry name" value="Translation proteins"/>
    <property type="match status" value="1"/>
</dbReference>
<dbReference type="PROSITE" id="PS00301">
    <property type="entry name" value="G_TR_1"/>
    <property type="match status" value="1"/>
</dbReference>
<dbReference type="PROSITE" id="PS51722">
    <property type="entry name" value="G_TR_2"/>
    <property type="match status" value="1"/>
</dbReference>
<comment type="function">
    <text evidence="1">Increases the formation of ribosomal termination complexes and stimulates activities of RF-1 and RF-2. It binds guanine nucleotides and has strong preference for UGA stop codons. It may interact directly with the ribosome. The stimulation of RF-1 and RF-2 is significantly reduced by GTP and GDP, but not by GMP.</text>
</comment>
<comment type="subcellular location">
    <subcellularLocation>
        <location evidence="1">Cytoplasm</location>
    </subcellularLocation>
</comment>
<comment type="similarity">
    <text evidence="1">Belongs to the TRAFAC class translation factor GTPase superfamily. Classic translation factor GTPase family. PrfC subfamily.</text>
</comment>